<dbReference type="EC" id="3.1.2.-" evidence="1"/>
<dbReference type="EMBL" id="CP000034">
    <property type="protein sequence ID" value="ABB60735.1"/>
    <property type="molecule type" value="Genomic_DNA"/>
</dbReference>
<dbReference type="RefSeq" id="WP_000637953.1">
    <property type="nucleotide sequence ID" value="NC_007606.1"/>
</dbReference>
<dbReference type="RefSeq" id="YP_402224.1">
    <property type="nucleotide sequence ID" value="NC_007606.1"/>
</dbReference>
<dbReference type="SMR" id="Q32IX2"/>
<dbReference type="STRING" id="300267.SDY_0528"/>
<dbReference type="EnsemblBacteria" id="ABB60735">
    <property type="protein sequence ID" value="ABB60735"/>
    <property type="gene ID" value="SDY_0528"/>
</dbReference>
<dbReference type="GeneID" id="86863118"/>
<dbReference type="KEGG" id="sdy:SDY_0528"/>
<dbReference type="PATRIC" id="fig|300267.13.peg.621"/>
<dbReference type="HOGENOM" id="CLU_089876_13_1_6"/>
<dbReference type="UniPathway" id="UPA00017"/>
<dbReference type="Proteomes" id="UP000002716">
    <property type="component" value="Chromosome"/>
</dbReference>
<dbReference type="GO" id="GO:0005829">
    <property type="term" value="C:cytosol"/>
    <property type="evidence" value="ECO:0007669"/>
    <property type="project" value="TreeGrafter"/>
</dbReference>
<dbReference type="GO" id="GO:0061522">
    <property type="term" value="F:1,4-dihydroxy-2-naphthoyl-CoA thioesterase activity"/>
    <property type="evidence" value="ECO:0007669"/>
    <property type="project" value="TreeGrafter"/>
</dbReference>
<dbReference type="GO" id="GO:0009239">
    <property type="term" value="P:enterobactin biosynthetic process"/>
    <property type="evidence" value="ECO:0007669"/>
    <property type="project" value="UniProtKB-UniRule"/>
</dbReference>
<dbReference type="CDD" id="cd03443">
    <property type="entry name" value="PaaI_thioesterase"/>
    <property type="match status" value="1"/>
</dbReference>
<dbReference type="FunFam" id="3.10.129.10:FF:000002">
    <property type="entry name" value="1,4-dihydroxy-2-naphthoyl-CoA hydrolase"/>
    <property type="match status" value="1"/>
</dbReference>
<dbReference type="Gene3D" id="3.10.129.10">
    <property type="entry name" value="Hotdog Thioesterase"/>
    <property type="match status" value="1"/>
</dbReference>
<dbReference type="HAMAP" id="MF_00907">
    <property type="entry name" value="Thioesterase_EntH"/>
    <property type="match status" value="1"/>
</dbReference>
<dbReference type="InterPro" id="IPR029069">
    <property type="entry name" value="HotDog_dom_sf"/>
</dbReference>
<dbReference type="InterPro" id="IPR003736">
    <property type="entry name" value="PAAI_dom"/>
</dbReference>
<dbReference type="InterPro" id="IPR026576">
    <property type="entry name" value="Thioesterase_EntH"/>
</dbReference>
<dbReference type="InterPro" id="IPR006683">
    <property type="entry name" value="Thioestr_dom"/>
</dbReference>
<dbReference type="NCBIfam" id="NF007607">
    <property type="entry name" value="PRK10254.1"/>
    <property type="match status" value="1"/>
</dbReference>
<dbReference type="NCBIfam" id="TIGR00369">
    <property type="entry name" value="unchar_dom_1"/>
    <property type="match status" value="1"/>
</dbReference>
<dbReference type="PANTHER" id="PTHR43240">
    <property type="entry name" value="1,4-DIHYDROXY-2-NAPHTHOYL-COA THIOESTERASE 1"/>
    <property type="match status" value="1"/>
</dbReference>
<dbReference type="PANTHER" id="PTHR43240:SF9">
    <property type="entry name" value="PROOFREADING THIOESTERASE ENTH"/>
    <property type="match status" value="1"/>
</dbReference>
<dbReference type="Pfam" id="PF03061">
    <property type="entry name" value="4HBT"/>
    <property type="match status" value="1"/>
</dbReference>
<dbReference type="SUPFAM" id="SSF54637">
    <property type="entry name" value="Thioesterase/thiol ester dehydrase-isomerase"/>
    <property type="match status" value="1"/>
</dbReference>
<protein>
    <recommendedName>
        <fullName evidence="1">Proofreading thioesterase EntH</fullName>
        <ecNumber evidence="1">3.1.2.-</ecNumber>
    </recommendedName>
    <alternativeName>
        <fullName evidence="1">Enterobactin synthase component H</fullName>
    </alternativeName>
</protein>
<feature type="chain" id="PRO_0000413877" description="Proofreading thioesterase EntH">
    <location>
        <begin position="1"/>
        <end position="137"/>
    </location>
</feature>
<feature type="active site" description="Nucleophile or proton acceptor" evidence="1">
    <location>
        <position position="63"/>
    </location>
</feature>
<sequence length="137" mass="14970">MIWKRHLTLDELNATSDNTMVAHLGIVYTRLGDDVLEAEMPVDTRTHQPFGLLHGGASAALAETLGSMAGFMMTRDGQCVVGTELNATHHRPVSEGKVRGVCQPLHLGRQNQSWEIVVFDEQGRRCCTCRLGTAVLG</sequence>
<evidence type="ECO:0000255" key="1">
    <source>
        <dbReference type="HAMAP-Rule" id="MF_00907"/>
    </source>
</evidence>
<name>ENTH_SHIDS</name>
<accession>Q32IX2</accession>
<proteinExistence type="inferred from homology"/>
<gene>
    <name evidence="1" type="primary">entH</name>
    <name type="ordered locus">SDY_0528</name>
</gene>
<comment type="function">
    <text evidence="1">Required for optimal enterobactin synthesis. Acts as a proofreading enzyme that prevents EntB misacylation by hydrolyzing the thioester bound existing between EntB and wrongly charged molecules.</text>
</comment>
<comment type="pathway">
    <text evidence="1">Siderophore biosynthesis; enterobactin biosynthesis.</text>
</comment>
<comment type="subunit">
    <text evidence="1">Homotetramer. Dimer of dimers. Interacts specifically with the aryl carrier protein (ArCP) domain of EntB.</text>
</comment>
<comment type="subcellular location">
    <subcellularLocation>
        <location evidence="1">Cytoplasm</location>
    </subcellularLocation>
</comment>
<comment type="similarity">
    <text evidence="1">Belongs to the thioesterase PaaI family.</text>
</comment>
<keyword id="KW-0963">Cytoplasm</keyword>
<keyword id="KW-0378">Hydrolase</keyword>
<keyword id="KW-1185">Reference proteome</keyword>
<organism>
    <name type="scientific">Shigella dysenteriae serotype 1 (strain Sd197)</name>
    <dbReference type="NCBI Taxonomy" id="300267"/>
    <lineage>
        <taxon>Bacteria</taxon>
        <taxon>Pseudomonadati</taxon>
        <taxon>Pseudomonadota</taxon>
        <taxon>Gammaproteobacteria</taxon>
        <taxon>Enterobacterales</taxon>
        <taxon>Enterobacteriaceae</taxon>
        <taxon>Shigella</taxon>
    </lineage>
</organism>
<reference key="1">
    <citation type="journal article" date="2005" name="Nucleic Acids Res.">
        <title>Genome dynamics and diversity of Shigella species, the etiologic agents of bacillary dysentery.</title>
        <authorList>
            <person name="Yang F."/>
            <person name="Yang J."/>
            <person name="Zhang X."/>
            <person name="Chen L."/>
            <person name="Jiang Y."/>
            <person name="Yan Y."/>
            <person name="Tang X."/>
            <person name="Wang J."/>
            <person name="Xiong Z."/>
            <person name="Dong J."/>
            <person name="Xue Y."/>
            <person name="Zhu Y."/>
            <person name="Xu X."/>
            <person name="Sun L."/>
            <person name="Chen S."/>
            <person name="Nie H."/>
            <person name="Peng J."/>
            <person name="Xu J."/>
            <person name="Wang Y."/>
            <person name="Yuan Z."/>
            <person name="Wen Y."/>
            <person name="Yao Z."/>
            <person name="Shen Y."/>
            <person name="Qiang B."/>
            <person name="Hou Y."/>
            <person name="Yu J."/>
            <person name="Jin Q."/>
        </authorList>
    </citation>
    <scope>NUCLEOTIDE SEQUENCE [LARGE SCALE GENOMIC DNA]</scope>
    <source>
        <strain>Sd197</strain>
    </source>
</reference>